<name>SESD1_DANRE</name>
<keyword id="KW-0025">Alternative splicing</keyword>
<keyword id="KW-1185">Reference proteome</keyword>
<keyword id="KW-0677">Repeat</keyword>
<evidence type="ECO:0000250" key="1"/>
<evidence type="ECO:0000255" key="2">
    <source>
        <dbReference type="PROSITE-ProRule" id="PRU00056"/>
    </source>
</evidence>
<evidence type="ECO:0000256" key="3">
    <source>
        <dbReference type="SAM" id="MobiDB-lite"/>
    </source>
</evidence>
<evidence type="ECO:0000305" key="4"/>
<proteinExistence type="evidence at transcript level"/>
<accession>Q7SX85</accession>
<accession>A4IG23</accession>
<accession>Q7ZZ43</accession>
<accession>Q8AW09</accession>
<dbReference type="EMBL" id="AB096104">
    <property type="protein sequence ID" value="BAC78395.1"/>
    <property type="molecule type" value="mRNA"/>
</dbReference>
<dbReference type="EMBL" id="AL732415">
    <property type="protein sequence ID" value="CAD58743.1"/>
    <property type="status" value="ALT_SEQ"/>
    <property type="molecule type" value="Genomic_DNA"/>
</dbReference>
<dbReference type="EMBL" id="AL732458">
    <property type="protein sequence ID" value="CAD61241.1"/>
    <property type="molecule type" value="Genomic_DNA"/>
</dbReference>
<dbReference type="EMBL" id="CR848760">
    <property type="status" value="NOT_ANNOTATED_CDS"/>
    <property type="molecule type" value="Genomic_DNA"/>
</dbReference>
<dbReference type="EMBL" id="BC134893">
    <property type="protein sequence ID" value="AAI34894.1"/>
    <property type="molecule type" value="mRNA"/>
</dbReference>
<dbReference type="RefSeq" id="NP_878301.2">
    <molecule id="Q7SX85-1"/>
    <property type="nucleotide sequence ID" value="NM_182881.2"/>
</dbReference>
<dbReference type="RefSeq" id="XP_005167932.1">
    <molecule id="Q7SX85-1"/>
    <property type="nucleotide sequence ID" value="XM_005167875.5"/>
</dbReference>
<dbReference type="SMR" id="Q7SX85"/>
<dbReference type="FunCoup" id="Q7SX85">
    <property type="interactions" value="1056"/>
</dbReference>
<dbReference type="STRING" id="7955.ENSDARP00000116017"/>
<dbReference type="PaxDb" id="7955-ENSDARP00000116017"/>
<dbReference type="Ensembl" id="ENSDART00000059448">
    <molecule id="Q7SX85-1"/>
    <property type="protein sequence ID" value="ENSDARP00000059447"/>
    <property type="gene ID" value="ENSDARG00000040614"/>
</dbReference>
<dbReference type="Ensembl" id="ENSDART00000139775">
    <molecule id="Q7SX85-1"/>
    <property type="protein sequence ID" value="ENSDARP00000116017"/>
    <property type="gene ID" value="ENSDARG00000040614"/>
</dbReference>
<dbReference type="Ensembl" id="ENSDART00000192523">
    <molecule id="Q7SX85-1"/>
    <property type="protein sequence ID" value="ENSDARP00000152076"/>
    <property type="gene ID" value="ENSDARG00000040614"/>
</dbReference>
<dbReference type="GeneID" id="360133"/>
<dbReference type="KEGG" id="dre:360133"/>
<dbReference type="AGR" id="ZFIN:ZDB-GENE-030801-1"/>
<dbReference type="CTD" id="91404"/>
<dbReference type="ZFIN" id="ZDB-GENE-030801-1">
    <property type="gene designation" value="sestd1"/>
</dbReference>
<dbReference type="eggNOG" id="KOG4240">
    <property type="taxonomic scope" value="Eukaryota"/>
</dbReference>
<dbReference type="HOGENOM" id="CLU_010440_1_0_1"/>
<dbReference type="InParanoid" id="Q7SX85"/>
<dbReference type="OMA" id="PDAFWDK"/>
<dbReference type="OrthoDB" id="5859883at2759"/>
<dbReference type="PhylomeDB" id="Q7SX85"/>
<dbReference type="TreeFam" id="TF332003"/>
<dbReference type="PRO" id="PR:Q7SX85"/>
<dbReference type="Proteomes" id="UP000000437">
    <property type="component" value="Chromosome 9"/>
</dbReference>
<dbReference type="Bgee" id="ENSDARG00000040614">
    <property type="expression patterns" value="Expressed in blastula and 34 other cell types or tissues"/>
</dbReference>
<dbReference type="ExpressionAtlas" id="Q7SX85">
    <property type="expression patterns" value="baseline and differential"/>
</dbReference>
<dbReference type="GO" id="GO:0043325">
    <property type="term" value="F:phosphatidylinositol-3,4-bisphosphate binding"/>
    <property type="evidence" value="ECO:0000318"/>
    <property type="project" value="GO_Central"/>
</dbReference>
<dbReference type="GO" id="GO:0080025">
    <property type="term" value="F:phosphatidylinositol-3,5-bisphosphate binding"/>
    <property type="evidence" value="ECO:0000318"/>
    <property type="project" value="GO_Central"/>
</dbReference>
<dbReference type="GO" id="GO:0032266">
    <property type="term" value="F:phosphatidylinositol-3-phosphate binding"/>
    <property type="evidence" value="ECO:0000318"/>
    <property type="project" value="GO_Central"/>
</dbReference>
<dbReference type="GO" id="GO:0005546">
    <property type="term" value="F:phosphatidylinositol-4,5-bisphosphate binding"/>
    <property type="evidence" value="ECO:0000318"/>
    <property type="project" value="GO_Central"/>
</dbReference>
<dbReference type="GO" id="GO:0070273">
    <property type="term" value="F:phosphatidylinositol-4-phosphate binding"/>
    <property type="evidence" value="ECO:0000318"/>
    <property type="project" value="GO_Central"/>
</dbReference>
<dbReference type="GO" id="GO:0010314">
    <property type="term" value="F:phosphatidylinositol-5-phosphate binding"/>
    <property type="evidence" value="ECO:0000318"/>
    <property type="project" value="GO_Central"/>
</dbReference>
<dbReference type="GO" id="GO:0048514">
    <property type="term" value="P:blood vessel morphogenesis"/>
    <property type="evidence" value="ECO:0000315"/>
    <property type="project" value="ZFIN"/>
</dbReference>
<dbReference type="FunFam" id="1.20.58.60:FF:000124">
    <property type="entry name" value="SEC14 domain and spectrin repeat-containing protein 1"/>
    <property type="match status" value="1"/>
</dbReference>
<dbReference type="FunFam" id="1.20.58.60:FF:000187">
    <property type="entry name" value="SEC14 domain and spectrin repeat-containing protein 1 isoform X2"/>
    <property type="match status" value="1"/>
</dbReference>
<dbReference type="Gene3D" id="1.20.58.60">
    <property type="match status" value="2"/>
</dbReference>
<dbReference type="InterPro" id="IPR001251">
    <property type="entry name" value="CRAL-TRIO_dom"/>
</dbReference>
<dbReference type="InterPro" id="IPR018159">
    <property type="entry name" value="Spectrin/alpha-actinin"/>
</dbReference>
<dbReference type="InterPro" id="IPR056804">
    <property type="entry name" value="Spectrin_SESTD1"/>
</dbReference>
<dbReference type="PANTHER" id="PTHR46607">
    <property type="entry name" value="SEC14 DOMAIN AND SPECTRIN REPEAT-CONTAINING PROTEIN 1"/>
    <property type="match status" value="1"/>
</dbReference>
<dbReference type="PANTHER" id="PTHR46607:SF1">
    <property type="entry name" value="SEC14 DOMAIN AND SPECTRIN REPEAT-CONTAINING PROTEIN 1"/>
    <property type="match status" value="1"/>
</dbReference>
<dbReference type="Pfam" id="PF13716">
    <property type="entry name" value="CRAL_TRIO_2"/>
    <property type="match status" value="1"/>
</dbReference>
<dbReference type="Pfam" id="PF24915">
    <property type="entry name" value="Spectrin_SESTD1"/>
    <property type="match status" value="1"/>
</dbReference>
<dbReference type="SMART" id="SM00150">
    <property type="entry name" value="SPEC"/>
    <property type="match status" value="2"/>
</dbReference>
<dbReference type="SUPFAM" id="SSF46966">
    <property type="entry name" value="Spectrin repeat"/>
    <property type="match status" value="2"/>
</dbReference>
<dbReference type="PROSITE" id="PS50191">
    <property type="entry name" value="CRAL_TRIO"/>
    <property type="match status" value="1"/>
</dbReference>
<sequence>MEASCILPVLKKKLAFLSGGKDRRSGLILTIPLCTEQTSMEELSTTLDYLLGIPSEKCKARGFTVIVDGRKSQWNIVKTVVLMLQNVIPAEVSLVCVVKPDEFWDKKVTHFCFWKEKDRLGFEVILVSANKLTRYIEPCQLTDEFGGSLLYDHLDWVNKRLVFEKFTKESTSLLDELIVINENEKGSQAEKDRSSESNILPSFDPETVLQTGHELLSELQQRRFNGSEGGGGGGTAWSPMDDELLAQPQVMKLLDSLREQYTKYQEVCRQRSKRSQLEEIQTKVMQVVNWLEGPGTDQLRTQWGIGDSIRASQALQQKHEEIESQHSEWFAVYVELNQQIAALLSAGDEEDLMELKGLQQQLSDVCYRQASQLEFRQNVLQSAYEFHMTAQDLSQQLDGLLGMLCADVAPADGAAIQQTLKHLEEKLKSVESALQTLREKGQALLDQMSNQTSFSYGKEVGVENKENIDHIHSVMEDMQLRKQRCEDMVDVRRLKMLQMVQLFKCEEDASQAVEWLGELLDALLKTHIRLGDDSQETKVLLEKHKKFVDVAQSTYDYGRQLLQATVVLCQSLRCTTRSSGDTLPRLNRVWKQFTVTSDERQHRLEMASAFHTAAEKIVRESPELAELLVDVEAYEEVETLGKGLLDRLTVPVIFPDGSEQFFGSPGDMASSAESIRERMKLVEEKRFLQEEAEQRLEEEEEEEEAALEVEPRES</sequence>
<protein>
    <recommendedName>
        <fullName>SEC14 domain and spectrin repeat-containing protein 1</fullName>
    </recommendedName>
    <alternativeName>
        <fullName>Protein Solo</fullName>
    </alternativeName>
</protein>
<reference key="1">
    <citation type="journal article" date="2003" name="Genomics">
        <title>Representational difference analysis, high-resolution physical mapping, and transcript identification of the zebrafish genomic region for a motor behavior.</title>
        <authorList>
            <person name="Sato T."/>
            <person name="Mishina M."/>
        </authorList>
    </citation>
    <scope>NUCLEOTIDE SEQUENCE [MRNA] (ISOFORM 1)</scope>
    <source>
        <strain>AB</strain>
        <tissue>Embryo</tissue>
    </source>
</reference>
<reference key="2">
    <citation type="journal article" date="2013" name="Nature">
        <title>The zebrafish reference genome sequence and its relationship to the human genome.</title>
        <authorList>
            <person name="Howe K."/>
            <person name="Clark M.D."/>
            <person name="Torroja C.F."/>
            <person name="Torrance J."/>
            <person name="Berthelot C."/>
            <person name="Muffato M."/>
            <person name="Collins J.E."/>
            <person name="Humphray S."/>
            <person name="McLaren K."/>
            <person name="Matthews L."/>
            <person name="McLaren S."/>
            <person name="Sealy I."/>
            <person name="Caccamo M."/>
            <person name="Churcher C."/>
            <person name="Scott C."/>
            <person name="Barrett J.C."/>
            <person name="Koch R."/>
            <person name="Rauch G.J."/>
            <person name="White S."/>
            <person name="Chow W."/>
            <person name="Kilian B."/>
            <person name="Quintais L.T."/>
            <person name="Guerra-Assuncao J.A."/>
            <person name="Zhou Y."/>
            <person name="Gu Y."/>
            <person name="Yen J."/>
            <person name="Vogel J.H."/>
            <person name="Eyre T."/>
            <person name="Redmond S."/>
            <person name="Banerjee R."/>
            <person name="Chi J."/>
            <person name="Fu B."/>
            <person name="Langley E."/>
            <person name="Maguire S.F."/>
            <person name="Laird G.K."/>
            <person name="Lloyd D."/>
            <person name="Kenyon E."/>
            <person name="Donaldson S."/>
            <person name="Sehra H."/>
            <person name="Almeida-King J."/>
            <person name="Loveland J."/>
            <person name="Trevanion S."/>
            <person name="Jones M."/>
            <person name="Quail M."/>
            <person name="Willey D."/>
            <person name="Hunt A."/>
            <person name="Burton J."/>
            <person name="Sims S."/>
            <person name="McLay K."/>
            <person name="Plumb B."/>
            <person name="Davis J."/>
            <person name="Clee C."/>
            <person name="Oliver K."/>
            <person name="Clark R."/>
            <person name="Riddle C."/>
            <person name="Elliot D."/>
            <person name="Threadgold G."/>
            <person name="Harden G."/>
            <person name="Ware D."/>
            <person name="Begum S."/>
            <person name="Mortimore B."/>
            <person name="Kerry G."/>
            <person name="Heath P."/>
            <person name="Phillimore B."/>
            <person name="Tracey A."/>
            <person name="Corby N."/>
            <person name="Dunn M."/>
            <person name="Johnson C."/>
            <person name="Wood J."/>
            <person name="Clark S."/>
            <person name="Pelan S."/>
            <person name="Griffiths G."/>
            <person name="Smith M."/>
            <person name="Glithero R."/>
            <person name="Howden P."/>
            <person name="Barker N."/>
            <person name="Lloyd C."/>
            <person name="Stevens C."/>
            <person name="Harley J."/>
            <person name="Holt K."/>
            <person name="Panagiotidis G."/>
            <person name="Lovell J."/>
            <person name="Beasley H."/>
            <person name="Henderson C."/>
            <person name="Gordon D."/>
            <person name="Auger K."/>
            <person name="Wright D."/>
            <person name="Collins J."/>
            <person name="Raisen C."/>
            <person name="Dyer L."/>
            <person name="Leung K."/>
            <person name="Robertson L."/>
            <person name="Ambridge K."/>
            <person name="Leongamornlert D."/>
            <person name="McGuire S."/>
            <person name="Gilderthorp R."/>
            <person name="Griffiths C."/>
            <person name="Manthravadi D."/>
            <person name="Nichol S."/>
            <person name="Barker G."/>
            <person name="Whitehead S."/>
            <person name="Kay M."/>
            <person name="Brown J."/>
            <person name="Murnane C."/>
            <person name="Gray E."/>
            <person name="Humphries M."/>
            <person name="Sycamore N."/>
            <person name="Barker D."/>
            <person name="Saunders D."/>
            <person name="Wallis J."/>
            <person name="Babbage A."/>
            <person name="Hammond S."/>
            <person name="Mashreghi-Mohammadi M."/>
            <person name="Barr L."/>
            <person name="Martin S."/>
            <person name="Wray P."/>
            <person name="Ellington A."/>
            <person name="Matthews N."/>
            <person name="Ellwood M."/>
            <person name="Woodmansey R."/>
            <person name="Clark G."/>
            <person name="Cooper J."/>
            <person name="Tromans A."/>
            <person name="Grafham D."/>
            <person name="Skuce C."/>
            <person name="Pandian R."/>
            <person name="Andrews R."/>
            <person name="Harrison E."/>
            <person name="Kimberley A."/>
            <person name="Garnett J."/>
            <person name="Fosker N."/>
            <person name="Hall R."/>
            <person name="Garner P."/>
            <person name="Kelly D."/>
            <person name="Bird C."/>
            <person name="Palmer S."/>
            <person name="Gehring I."/>
            <person name="Berger A."/>
            <person name="Dooley C.M."/>
            <person name="Ersan-Urun Z."/>
            <person name="Eser C."/>
            <person name="Geiger H."/>
            <person name="Geisler M."/>
            <person name="Karotki L."/>
            <person name="Kirn A."/>
            <person name="Konantz J."/>
            <person name="Konantz M."/>
            <person name="Oberlander M."/>
            <person name="Rudolph-Geiger S."/>
            <person name="Teucke M."/>
            <person name="Lanz C."/>
            <person name="Raddatz G."/>
            <person name="Osoegawa K."/>
            <person name="Zhu B."/>
            <person name="Rapp A."/>
            <person name="Widaa S."/>
            <person name="Langford C."/>
            <person name="Yang F."/>
            <person name="Schuster S.C."/>
            <person name="Carter N.P."/>
            <person name="Harrow J."/>
            <person name="Ning Z."/>
            <person name="Herrero J."/>
            <person name="Searle S.M."/>
            <person name="Enright A."/>
            <person name="Geisler R."/>
            <person name="Plasterk R.H."/>
            <person name="Lee C."/>
            <person name="Westerfield M."/>
            <person name="de Jong P.J."/>
            <person name="Zon L.I."/>
            <person name="Postlethwait J.H."/>
            <person name="Nusslein-Volhard C."/>
            <person name="Hubbard T.J."/>
            <person name="Roest Crollius H."/>
            <person name="Rogers J."/>
            <person name="Stemple D.L."/>
        </authorList>
    </citation>
    <scope>NUCLEOTIDE SEQUENCE [LARGE SCALE GENOMIC DNA]</scope>
    <source>
        <strain>Tuebingen</strain>
    </source>
</reference>
<reference key="3">
    <citation type="submission" date="2007-03" db="EMBL/GenBank/DDBJ databases">
        <authorList>
            <consortium name="NIH - Zebrafish Gene Collection (ZGC) project"/>
        </authorList>
    </citation>
    <scope>NUCLEOTIDE SEQUENCE [LARGE SCALE MRNA] (ISOFORM 1)</scope>
    <source>
        <strain>WIK</strain>
    </source>
</reference>
<feature type="chain" id="PRO_0000309497" description="SEC14 domain and spectrin repeat-containing protein 1">
    <location>
        <begin position="1"/>
        <end position="714"/>
    </location>
</feature>
<feature type="domain" description="CRAL-TRIO" evidence="2">
    <location>
        <begin position="1"/>
        <end position="153"/>
    </location>
</feature>
<feature type="repeat" description="Spectrin 1">
    <location>
        <begin position="275"/>
        <end position="381"/>
    </location>
</feature>
<feature type="repeat" description="Spectrin 2">
    <location>
        <begin position="384"/>
        <end position="497"/>
    </location>
</feature>
<feature type="repeat" description="Spectrin 3">
    <location>
        <begin position="503"/>
        <end position="605"/>
    </location>
</feature>
<feature type="region of interest" description="Disordered" evidence="3">
    <location>
        <begin position="691"/>
        <end position="714"/>
    </location>
</feature>
<feature type="compositionally biased region" description="Acidic residues" evidence="3">
    <location>
        <begin position="696"/>
        <end position="707"/>
    </location>
</feature>
<feature type="splice variant" id="VSP_035559" description="In isoform 2." evidence="4">
    <location>
        <begin position="1"/>
        <end position="39"/>
    </location>
</feature>
<feature type="splice variant" id="VSP_035560" description="In isoform 2." evidence="4">
    <location>
        <begin position="211"/>
        <end position="234"/>
    </location>
</feature>
<feature type="sequence conflict" description="In Ref. 1; BAC78395." evidence="4" ref="1">
    <original>G</original>
    <variation>K</variation>
    <location>
        <position position="230"/>
    </location>
</feature>
<feature type="sequence conflict" description="In Ref. 1; BAC78395." evidence="4" ref="1">
    <original>L</original>
    <variation>V</variation>
    <location>
        <position position="627"/>
    </location>
</feature>
<gene>
    <name type="primary">sestd1</name>
    <name type="synonym">sol</name>
    <name type="synonym">solo</name>
    <name type="ORF">si:dz106a20.1</name>
    <name type="ORF">si:dz42h5.2</name>
</gene>
<organism>
    <name type="scientific">Danio rerio</name>
    <name type="common">Zebrafish</name>
    <name type="synonym">Brachydanio rerio</name>
    <dbReference type="NCBI Taxonomy" id="7955"/>
    <lineage>
        <taxon>Eukaryota</taxon>
        <taxon>Metazoa</taxon>
        <taxon>Chordata</taxon>
        <taxon>Craniata</taxon>
        <taxon>Vertebrata</taxon>
        <taxon>Euteleostomi</taxon>
        <taxon>Actinopterygii</taxon>
        <taxon>Neopterygii</taxon>
        <taxon>Teleostei</taxon>
        <taxon>Ostariophysi</taxon>
        <taxon>Cypriniformes</taxon>
        <taxon>Danionidae</taxon>
        <taxon>Danioninae</taxon>
        <taxon>Danio</taxon>
    </lineage>
</organism>
<comment type="function">
    <text evidence="1">May act as the primary docking protein directing membrane turnover and assembly of the transient receptor potential channels trpc4 and trpc5. Binds phospholipids (By similarity).</text>
</comment>
<comment type="alternative products">
    <event type="alternative splicing"/>
    <isoform>
        <id>Q7SX85-1</id>
        <name>1</name>
        <sequence type="displayed"/>
    </isoform>
    <isoform>
        <id>Q7SX85-2</id>
        <name>2</name>
        <sequence type="described" ref="VSP_035559 VSP_035560"/>
    </isoform>
</comment>
<comment type="similarity">
    <text evidence="4">Belongs to the SOLO family.</text>
</comment>
<comment type="sequence caution" evidence="4">
    <conflict type="erroneous gene model prediction">
        <sequence resource="EMBL-CDS" id="CAD58743"/>
    </conflict>
</comment>